<keyword id="KW-0963">Cytoplasm</keyword>
<keyword id="KW-0456">Lyase</keyword>
<keyword id="KW-0479">Metal-binding</keyword>
<keyword id="KW-1185">Reference proteome</keyword>
<keyword id="KW-0684">Rhamnose metabolism</keyword>
<keyword id="KW-0862">Zinc</keyword>
<organism>
    <name type="scientific">Shigella sonnei (strain Ss046)</name>
    <dbReference type="NCBI Taxonomy" id="300269"/>
    <lineage>
        <taxon>Bacteria</taxon>
        <taxon>Pseudomonadati</taxon>
        <taxon>Pseudomonadota</taxon>
        <taxon>Gammaproteobacteria</taxon>
        <taxon>Enterobacterales</taxon>
        <taxon>Enterobacteriaceae</taxon>
        <taxon>Shigella</taxon>
    </lineage>
</organism>
<name>RHAD_SHISS</name>
<reference key="1">
    <citation type="journal article" date="2005" name="Nucleic Acids Res.">
        <title>Genome dynamics and diversity of Shigella species, the etiologic agents of bacillary dysentery.</title>
        <authorList>
            <person name="Yang F."/>
            <person name="Yang J."/>
            <person name="Zhang X."/>
            <person name="Chen L."/>
            <person name="Jiang Y."/>
            <person name="Yan Y."/>
            <person name="Tang X."/>
            <person name="Wang J."/>
            <person name="Xiong Z."/>
            <person name="Dong J."/>
            <person name="Xue Y."/>
            <person name="Zhu Y."/>
            <person name="Xu X."/>
            <person name="Sun L."/>
            <person name="Chen S."/>
            <person name="Nie H."/>
            <person name="Peng J."/>
            <person name="Xu J."/>
            <person name="Wang Y."/>
            <person name="Yuan Z."/>
            <person name="Wen Y."/>
            <person name="Yao Z."/>
            <person name="Shen Y."/>
            <person name="Qiang B."/>
            <person name="Hou Y."/>
            <person name="Yu J."/>
            <person name="Jin Q."/>
        </authorList>
    </citation>
    <scope>NUCLEOTIDE SEQUENCE [LARGE SCALE GENOMIC DNA]</scope>
    <source>
        <strain>Ss046</strain>
    </source>
</reference>
<dbReference type="EC" id="4.1.2.19" evidence="1"/>
<dbReference type="EMBL" id="CP000038">
    <property type="protein sequence ID" value="AAZ90588.1"/>
    <property type="molecule type" value="Genomic_DNA"/>
</dbReference>
<dbReference type="RefSeq" id="WP_001179756.1">
    <property type="nucleotide sequence ID" value="NC_007384.1"/>
</dbReference>
<dbReference type="SMR" id="Q3YV74"/>
<dbReference type="GeneID" id="93778036"/>
<dbReference type="KEGG" id="ssn:SSON_4072"/>
<dbReference type="HOGENOM" id="CLU_076831_0_0_6"/>
<dbReference type="UniPathway" id="UPA00541">
    <property type="reaction ID" value="UER00603"/>
</dbReference>
<dbReference type="Proteomes" id="UP000002529">
    <property type="component" value="Chromosome"/>
</dbReference>
<dbReference type="GO" id="GO:0005829">
    <property type="term" value="C:cytosol"/>
    <property type="evidence" value="ECO:0007669"/>
    <property type="project" value="TreeGrafter"/>
</dbReference>
<dbReference type="GO" id="GO:0046872">
    <property type="term" value="F:metal ion binding"/>
    <property type="evidence" value="ECO:0007669"/>
    <property type="project" value="UniProtKB-KW"/>
</dbReference>
<dbReference type="GO" id="GO:0008994">
    <property type="term" value="F:rhamnulose-1-phosphate aldolase activity"/>
    <property type="evidence" value="ECO:0007669"/>
    <property type="project" value="UniProtKB-UniRule"/>
</dbReference>
<dbReference type="GO" id="GO:0019323">
    <property type="term" value="P:pentose catabolic process"/>
    <property type="evidence" value="ECO:0007669"/>
    <property type="project" value="TreeGrafter"/>
</dbReference>
<dbReference type="GO" id="GO:0019301">
    <property type="term" value="P:rhamnose catabolic process"/>
    <property type="evidence" value="ECO:0007669"/>
    <property type="project" value="UniProtKB-UniRule"/>
</dbReference>
<dbReference type="CDD" id="cd00398">
    <property type="entry name" value="Aldolase_II"/>
    <property type="match status" value="1"/>
</dbReference>
<dbReference type="FunFam" id="3.40.225.10:FF:000006">
    <property type="entry name" value="Rhamnulose-1-phosphate aldolase"/>
    <property type="match status" value="1"/>
</dbReference>
<dbReference type="Gene3D" id="3.40.225.10">
    <property type="entry name" value="Class II aldolase/adducin N-terminal domain"/>
    <property type="match status" value="1"/>
</dbReference>
<dbReference type="HAMAP" id="MF_00770">
    <property type="entry name" value="RhaD"/>
    <property type="match status" value="1"/>
</dbReference>
<dbReference type="InterPro" id="IPR050197">
    <property type="entry name" value="Aldolase_class_II_sugar_metab"/>
</dbReference>
<dbReference type="InterPro" id="IPR001303">
    <property type="entry name" value="Aldolase_II/adducin_N"/>
</dbReference>
<dbReference type="InterPro" id="IPR036409">
    <property type="entry name" value="Aldolase_II/adducin_N_sf"/>
</dbReference>
<dbReference type="InterPro" id="IPR013447">
    <property type="entry name" value="Rhamnulose-1-P_Aldolase"/>
</dbReference>
<dbReference type="NCBIfam" id="NF002963">
    <property type="entry name" value="PRK03634.1"/>
    <property type="match status" value="1"/>
</dbReference>
<dbReference type="NCBIfam" id="TIGR02624">
    <property type="entry name" value="rhamnu_1P_ald"/>
    <property type="match status" value="1"/>
</dbReference>
<dbReference type="PANTHER" id="PTHR22789">
    <property type="entry name" value="FUCULOSE PHOSPHATE ALDOLASE"/>
    <property type="match status" value="1"/>
</dbReference>
<dbReference type="PANTHER" id="PTHR22789:SF16">
    <property type="entry name" value="RHAMNULOSE-1-PHOSPHATE ALDOLASE"/>
    <property type="match status" value="1"/>
</dbReference>
<dbReference type="Pfam" id="PF00596">
    <property type="entry name" value="Aldolase_II"/>
    <property type="match status" value="1"/>
</dbReference>
<dbReference type="SMART" id="SM01007">
    <property type="entry name" value="Aldolase_II"/>
    <property type="match status" value="1"/>
</dbReference>
<dbReference type="SUPFAM" id="SSF53639">
    <property type="entry name" value="AraD/HMP-PK domain-like"/>
    <property type="match status" value="1"/>
</dbReference>
<proteinExistence type="inferred from homology"/>
<protein>
    <recommendedName>
        <fullName evidence="1">Rhamnulose-1-phosphate aldolase</fullName>
        <ecNumber evidence="1">4.1.2.19</ecNumber>
    </recommendedName>
</protein>
<comment type="function">
    <text evidence="1">Catalyzes the reversible cleavage of L-rhamnulose-1-phosphate to dihydroxyacetone phosphate (DHAP) and L-lactaldehyde.</text>
</comment>
<comment type="catalytic activity">
    <reaction evidence="1">
        <text>L-rhamnulose 1-phosphate = (S)-lactaldehyde + dihydroxyacetone phosphate</text>
        <dbReference type="Rhea" id="RHEA:19689"/>
        <dbReference type="ChEBI" id="CHEBI:18041"/>
        <dbReference type="ChEBI" id="CHEBI:57642"/>
        <dbReference type="ChEBI" id="CHEBI:58313"/>
        <dbReference type="EC" id="4.1.2.19"/>
    </reaction>
</comment>
<comment type="cofactor">
    <cofactor evidence="1">
        <name>Zn(2+)</name>
        <dbReference type="ChEBI" id="CHEBI:29105"/>
    </cofactor>
    <text evidence="1">Binds 1 zinc ion per subunit.</text>
</comment>
<comment type="pathway">
    <text evidence="1">Carbohydrate degradation; L-rhamnose degradation; glycerone phosphate from L-rhamnose: step 3/3.</text>
</comment>
<comment type="subunit">
    <text evidence="1">Homotetramer.</text>
</comment>
<comment type="subcellular location">
    <subcellularLocation>
        <location evidence="1">Cytoplasm</location>
    </subcellularLocation>
</comment>
<comment type="similarity">
    <text evidence="1">Belongs to the aldolase class II family. RhaD subfamily.</text>
</comment>
<evidence type="ECO:0000255" key="1">
    <source>
        <dbReference type="HAMAP-Rule" id="MF_00770"/>
    </source>
</evidence>
<feature type="chain" id="PRO_1000017345" description="Rhamnulose-1-phosphate aldolase">
    <location>
        <begin position="1"/>
        <end position="274"/>
    </location>
</feature>
<feature type="active site" evidence="1">
    <location>
        <position position="117"/>
    </location>
</feature>
<feature type="binding site" evidence="1">
    <location>
        <position position="141"/>
    </location>
    <ligand>
        <name>Zn(2+)</name>
        <dbReference type="ChEBI" id="CHEBI:29105"/>
    </ligand>
</feature>
<feature type="binding site" evidence="1">
    <location>
        <position position="143"/>
    </location>
    <ligand>
        <name>Zn(2+)</name>
        <dbReference type="ChEBI" id="CHEBI:29105"/>
    </ligand>
</feature>
<feature type="binding site" evidence="1">
    <location>
        <position position="212"/>
    </location>
    <ligand>
        <name>Zn(2+)</name>
        <dbReference type="ChEBI" id="CHEBI:29105"/>
    </ligand>
</feature>
<gene>
    <name evidence="1" type="primary">rhaD</name>
    <name type="ordered locus">SSON_4072</name>
</gene>
<accession>Q3YV74</accession>
<sequence>MQNITQSWFVQGMIKATTDAWLKGWDERNGGNLTLRLDDADIAPYHGNFHAQPRYIPLSQPMPLLANTPFIVTGSGKFFRNVQLDPAANLGVVKVDSDGAGYHILWGLTNEAVPTSELPAHFLSHCERIKATNGKDRVIMHCHATNLIALTYVLENDTAVFTRQLWEGSTECLVVFPDGVGILPWMVPGTDEIGQATAQEMQKHSLVLWPFHGVFGSGSTLDETFGLIDTAEKSAQVLVKVYSMGGMKQTISREELIALGKRFGVTPLASALAL</sequence>